<evidence type="ECO:0000250" key="1"/>
<evidence type="ECO:0000305" key="2"/>
<proteinExistence type="inferred from homology"/>
<feature type="chain" id="PRO_0000300672" description="Low molecular weight protein-tyrosine-phosphatase PtpB">
    <location>
        <begin position="1"/>
        <end position="139"/>
    </location>
</feature>
<feature type="active site" description="Nucleophile" evidence="1">
    <location>
        <position position="7"/>
    </location>
</feature>
<feature type="active site" evidence="1">
    <location>
        <position position="13"/>
    </location>
</feature>
<feature type="active site" description="Proton donor" evidence="1">
    <location>
        <position position="111"/>
    </location>
</feature>
<protein>
    <recommendedName>
        <fullName>Low molecular weight protein-tyrosine-phosphatase PtpB</fullName>
        <ecNumber>3.1.3.48</ecNumber>
    </recommendedName>
    <alternativeName>
        <fullName>Phosphotyrosine phosphatase B</fullName>
        <shortName>PTPase B</shortName>
    </alternativeName>
</protein>
<sequence>MKILFVCTGNTCRSPLAESIAKEVMPNHQFESRGIFAVNNQGVSNYVEDLVEEHHLAETTLSQQFTEADLKADIILTMSYSHKELIEAHFGLQNHVFTLHEYVKEAGEVIDPYGGTKEMYVHTYEELVSLILKLKDIIC</sequence>
<organism>
    <name type="scientific">Staphylococcus aureus (strain COL)</name>
    <dbReference type="NCBI Taxonomy" id="93062"/>
    <lineage>
        <taxon>Bacteria</taxon>
        <taxon>Bacillati</taxon>
        <taxon>Bacillota</taxon>
        <taxon>Bacilli</taxon>
        <taxon>Bacillales</taxon>
        <taxon>Staphylococcaceae</taxon>
        <taxon>Staphylococcus</taxon>
    </lineage>
</organism>
<gene>
    <name type="primary">ptpB</name>
    <name type="ordered locus">SACOL2107</name>
</gene>
<comment type="function">
    <text evidence="1">Dephosphorylates the phosphotyrosine-containing proteins.</text>
</comment>
<comment type="catalytic activity">
    <reaction>
        <text>O-phospho-L-tyrosyl-[protein] + H2O = L-tyrosyl-[protein] + phosphate</text>
        <dbReference type="Rhea" id="RHEA:10684"/>
        <dbReference type="Rhea" id="RHEA-COMP:10136"/>
        <dbReference type="Rhea" id="RHEA-COMP:20101"/>
        <dbReference type="ChEBI" id="CHEBI:15377"/>
        <dbReference type="ChEBI" id="CHEBI:43474"/>
        <dbReference type="ChEBI" id="CHEBI:46858"/>
        <dbReference type="ChEBI" id="CHEBI:61978"/>
        <dbReference type="EC" id="3.1.3.48"/>
    </reaction>
</comment>
<comment type="similarity">
    <text evidence="2">Belongs to the low molecular weight phosphotyrosine protein phosphatase family.</text>
</comment>
<dbReference type="EC" id="3.1.3.48"/>
<dbReference type="EMBL" id="CP000046">
    <property type="protein sequence ID" value="AAW38417.1"/>
    <property type="molecule type" value="Genomic_DNA"/>
</dbReference>
<dbReference type="RefSeq" id="WP_000697334.1">
    <property type="nucleotide sequence ID" value="NZ_JBGOFO010000007.1"/>
</dbReference>
<dbReference type="SMR" id="Q5HE85"/>
<dbReference type="KEGG" id="sac:SACOL2107"/>
<dbReference type="HOGENOM" id="CLU_071415_1_2_9"/>
<dbReference type="Proteomes" id="UP000000530">
    <property type="component" value="Chromosome"/>
</dbReference>
<dbReference type="GO" id="GO:0004725">
    <property type="term" value="F:protein tyrosine phosphatase activity"/>
    <property type="evidence" value="ECO:0007669"/>
    <property type="project" value="UniProtKB-EC"/>
</dbReference>
<dbReference type="CDD" id="cd16344">
    <property type="entry name" value="LMWPAP"/>
    <property type="match status" value="1"/>
</dbReference>
<dbReference type="Gene3D" id="3.40.50.2300">
    <property type="match status" value="1"/>
</dbReference>
<dbReference type="InterPro" id="IPR050438">
    <property type="entry name" value="LMW_PTPase"/>
</dbReference>
<dbReference type="InterPro" id="IPR023485">
    <property type="entry name" value="Ptyr_pPase"/>
</dbReference>
<dbReference type="InterPro" id="IPR036196">
    <property type="entry name" value="Ptyr_pPase_sf"/>
</dbReference>
<dbReference type="InterPro" id="IPR017867">
    <property type="entry name" value="Tyr_phospatase_low_mol_wt"/>
</dbReference>
<dbReference type="PANTHER" id="PTHR11717">
    <property type="entry name" value="LOW MOLECULAR WEIGHT PROTEIN TYROSINE PHOSPHATASE"/>
    <property type="match status" value="1"/>
</dbReference>
<dbReference type="PANTHER" id="PTHR11717:SF31">
    <property type="entry name" value="LOW MOLECULAR WEIGHT PROTEIN-TYROSINE-PHOSPHATASE ETP-RELATED"/>
    <property type="match status" value="1"/>
</dbReference>
<dbReference type="Pfam" id="PF01451">
    <property type="entry name" value="LMWPc"/>
    <property type="match status" value="1"/>
</dbReference>
<dbReference type="PRINTS" id="PR00719">
    <property type="entry name" value="LMWPTPASE"/>
</dbReference>
<dbReference type="SMART" id="SM00226">
    <property type="entry name" value="LMWPc"/>
    <property type="match status" value="1"/>
</dbReference>
<dbReference type="SUPFAM" id="SSF52788">
    <property type="entry name" value="Phosphotyrosine protein phosphatases I"/>
    <property type="match status" value="1"/>
</dbReference>
<name>PTPB_STAAC</name>
<reference key="1">
    <citation type="journal article" date="2005" name="J. Bacteriol.">
        <title>Insights on evolution of virulence and resistance from the complete genome analysis of an early methicillin-resistant Staphylococcus aureus strain and a biofilm-producing methicillin-resistant Staphylococcus epidermidis strain.</title>
        <authorList>
            <person name="Gill S.R."/>
            <person name="Fouts D.E."/>
            <person name="Archer G.L."/>
            <person name="Mongodin E.F."/>
            <person name="DeBoy R.T."/>
            <person name="Ravel J."/>
            <person name="Paulsen I.T."/>
            <person name="Kolonay J.F."/>
            <person name="Brinkac L.M."/>
            <person name="Beanan M.J."/>
            <person name="Dodson R.J."/>
            <person name="Daugherty S.C."/>
            <person name="Madupu R."/>
            <person name="Angiuoli S.V."/>
            <person name="Durkin A.S."/>
            <person name="Haft D.H."/>
            <person name="Vamathevan J.J."/>
            <person name="Khouri H."/>
            <person name="Utterback T.R."/>
            <person name="Lee C."/>
            <person name="Dimitrov G."/>
            <person name="Jiang L."/>
            <person name="Qin H."/>
            <person name="Weidman J."/>
            <person name="Tran K."/>
            <person name="Kang K.H."/>
            <person name="Hance I.R."/>
            <person name="Nelson K.E."/>
            <person name="Fraser C.M."/>
        </authorList>
    </citation>
    <scope>NUCLEOTIDE SEQUENCE [LARGE SCALE GENOMIC DNA]</scope>
    <source>
        <strain>COL</strain>
    </source>
</reference>
<keyword id="KW-0378">Hydrolase</keyword>
<keyword id="KW-0904">Protein phosphatase</keyword>
<accession>Q5HE85</accession>